<proteinExistence type="evidence at protein level"/>
<name>IOVO_SYRRE</name>
<protein>
    <recommendedName>
        <fullName>Ovomucoid</fullName>
    </recommendedName>
</protein>
<sequence>LAAVSVDCSEYPKPACTMEYRPLCGSDNKTYGNKCNFCNAVVESNGTLTLSRFGEC</sequence>
<evidence type="ECO:0000255" key="1">
    <source>
        <dbReference type="PROSITE-ProRule" id="PRU00798"/>
    </source>
</evidence>
<organism>
    <name type="scientific">Syrmaticus reevesii</name>
    <name type="common">Reeves's pheasant</name>
    <name type="synonym">Phasianus reevesii</name>
    <dbReference type="NCBI Taxonomy" id="9066"/>
    <lineage>
        <taxon>Eukaryota</taxon>
        <taxon>Metazoa</taxon>
        <taxon>Chordata</taxon>
        <taxon>Craniata</taxon>
        <taxon>Vertebrata</taxon>
        <taxon>Euteleostomi</taxon>
        <taxon>Archelosauria</taxon>
        <taxon>Archosauria</taxon>
        <taxon>Dinosauria</taxon>
        <taxon>Saurischia</taxon>
        <taxon>Theropoda</taxon>
        <taxon>Coelurosauria</taxon>
        <taxon>Aves</taxon>
        <taxon>Neognathae</taxon>
        <taxon>Galloanserae</taxon>
        <taxon>Galliformes</taxon>
        <taxon>Phasianidae</taxon>
        <taxon>Phasianinae</taxon>
        <taxon>Syrmaticus</taxon>
    </lineage>
</organism>
<dbReference type="PIR" id="F31440">
    <property type="entry name" value="F31440"/>
</dbReference>
<dbReference type="SMR" id="P05605"/>
<dbReference type="GO" id="GO:0005615">
    <property type="term" value="C:extracellular space"/>
    <property type="evidence" value="ECO:0007669"/>
    <property type="project" value="UniProtKB-ARBA"/>
</dbReference>
<dbReference type="GO" id="GO:0004867">
    <property type="term" value="F:serine-type endopeptidase inhibitor activity"/>
    <property type="evidence" value="ECO:0007669"/>
    <property type="project" value="UniProtKB-KW"/>
</dbReference>
<dbReference type="CDD" id="cd00104">
    <property type="entry name" value="KAZAL_FS"/>
    <property type="match status" value="1"/>
</dbReference>
<dbReference type="FunFam" id="3.30.60.30:FF:000037">
    <property type="entry name" value="Ovomucoid"/>
    <property type="match status" value="1"/>
</dbReference>
<dbReference type="Gene3D" id="3.30.60.30">
    <property type="match status" value="1"/>
</dbReference>
<dbReference type="InterPro" id="IPR051597">
    <property type="entry name" value="Bifunctional_prot_inhibitor"/>
</dbReference>
<dbReference type="InterPro" id="IPR002350">
    <property type="entry name" value="Kazal_dom"/>
</dbReference>
<dbReference type="InterPro" id="IPR036058">
    <property type="entry name" value="Kazal_dom_sf"/>
</dbReference>
<dbReference type="InterPro" id="IPR001239">
    <property type="entry name" value="Prot_inh_Kazal-m"/>
</dbReference>
<dbReference type="PANTHER" id="PTHR47729:SF1">
    <property type="entry name" value="OVOMUCOID-LIKE-RELATED"/>
    <property type="match status" value="1"/>
</dbReference>
<dbReference type="PANTHER" id="PTHR47729">
    <property type="entry name" value="SERINE PEPTIDASE INHIBITOR, KAZAL TYPE 2, TANDEM DUPLICATE 1-RELATED"/>
    <property type="match status" value="1"/>
</dbReference>
<dbReference type="Pfam" id="PF00050">
    <property type="entry name" value="Kazal_1"/>
    <property type="match status" value="1"/>
</dbReference>
<dbReference type="PRINTS" id="PR00290">
    <property type="entry name" value="KAZALINHBTR"/>
</dbReference>
<dbReference type="SMART" id="SM00280">
    <property type="entry name" value="KAZAL"/>
    <property type="match status" value="1"/>
</dbReference>
<dbReference type="SUPFAM" id="SSF100895">
    <property type="entry name" value="Kazal-type serine protease inhibitors"/>
    <property type="match status" value="1"/>
</dbReference>
<dbReference type="PROSITE" id="PS00282">
    <property type="entry name" value="KAZAL_1"/>
    <property type="match status" value="1"/>
</dbReference>
<dbReference type="PROSITE" id="PS51465">
    <property type="entry name" value="KAZAL_2"/>
    <property type="match status" value="1"/>
</dbReference>
<keyword id="KW-0903">Direct protein sequencing</keyword>
<keyword id="KW-1015">Disulfide bond</keyword>
<keyword id="KW-0325">Glycoprotein</keyword>
<keyword id="KW-0646">Protease inhibitor</keyword>
<keyword id="KW-0677">Repeat</keyword>
<keyword id="KW-0964">Secreted</keyword>
<keyword id="KW-0722">Serine protease inhibitor</keyword>
<reference key="1">
    <citation type="journal article" date="1987" name="Biochemistry">
        <title>Ovomucoid third domains from 100 avian species: isolation, sequences, and hypervariability of enzyme-inhibitor contact residues.</title>
        <authorList>
            <person name="Laskowski M. Jr."/>
            <person name="Kato I."/>
            <person name="Ardelt W."/>
            <person name="Cook J."/>
            <person name="Denton A."/>
            <person name="Empie M.W."/>
            <person name="Kohr W.J."/>
            <person name="Park S.J."/>
            <person name="Parks K."/>
            <person name="Schatzley B.L."/>
            <person name="Schoenberger O.L."/>
            <person name="Tashiro M."/>
            <person name="Vichot G."/>
            <person name="Whatley H.E."/>
            <person name="Wieczorek A."/>
            <person name="Wieczorek M."/>
        </authorList>
    </citation>
    <scope>PROTEIN SEQUENCE</scope>
</reference>
<feature type="chain" id="PRO_0000073183" description="Ovomucoid">
    <location>
        <begin position="1" status="less than"/>
        <end position="56" status="greater than"/>
    </location>
</feature>
<feature type="domain" description="Kazal-like" evidence="1">
    <location>
        <begin position="6"/>
        <end position="56"/>
    </location>
</feature>
<feature type="site" description="Reactive bond 3">
    <location>
        <begin position="18"/>
        <end position="19"/>
    </location>
</feature>
<feature type="glycosylation site" description="N-linked (GlcNAc...) asparagine">
    <location>
        <position position="45"/>
    </location>
</feature>
<feature type="disulfide bond">
    <location>
        <begin position="8"/>
        <end position="38"/>
    </location>
</feature>
<feature type="disulfide bond">
    <location>
        <begin position="16"/>
        <end position="35"/>
    </location>
</feature>
<feature type="disulfide bond">
    <location>
        <begin position="24"/>
        <end position="56"/>
    </location>
</feature>
<feature type="non-terminal residue">
    <location>
        <position position="1"/>
    </location>
</feature>
<feature type="non-terminal residue">
    <location>
        <position position="56"/>
    </location>
</feature>
<accession>P05605</accession>
<comment type="subcellular location">
    <subcellularLocation>
        <location>Secreted</location>
    </subcellularLocation>
</comment>
<comment type="domain">
    <text>Avian ovomucoid consists of three homologous, tandem Kazal family inhibitory domains.</text>
</comment>